<sequence>MKLLTLGINHHTAPVAIREKVAFDPEFLQEALHDLRQHLLGANQSGLPEATILSTCNRTEVYCAANDANAANILHEATFDWLAKTQQLAPSSLQPHIYSLPQSDAVRHAFRVACGLDSMVIGETQILGQMKDAVRTANDAGVLGTYLNQLFQKTFAVAKEVRGSTEIGTHSISMAAASVRLSERIFEKISEQKILFIGAGDMITLCATHFVARKPKNVAIANRTIERGQELADSISAQDVQAESLKLSELPGRLHEFDIIVSSTASSLPIIGLGMVESALKQRRHKPMVMIDLAVPRDFEPEIARLDDVYLYTVDDLGVMIQTGTNLRQAAVSQAEAIIEDRVGNFMHWMQGRNAVPVIQDIQQQGERLRQLELERAMKRLMRGDDPQEVLNAMAQGLTNKFLHGSLHALQHSNGAERDALIKLLPKLFASHSKPEDH</sequence>
<protein>
    <recommendedName>
        <fullName evidence="1">Glutamyl-tRNA reductase</fullName>
        <shortName evidence="1">GluTR</shortName>
        <ecNumber evidence="1">1.2.1.70</ecNumber>
    </recommendedName>
</protein>
<proteinExistence type="inferred from homology"/>
<feature type="chain" id="PRO_1000075417" description="Glutamyl-tRNA reductase">
    <location>
        <begin position="1"/>
        <end position="438"/>
    </location>
</feature>
<feature type="active site" description="Nucleophile" evidence="1">
    <location>
        <position position="56"/>
    </location>
</feature>
<feature type="binding site" evidence="1">
    <location>
        <begin position="55"/>
        <end position="58"/>
    </location>
    <ligand>
        <name>substrate</name>
    </ligand>
</feature>
<feature type="binding site" evidence="1">
    <location>
        <position position="118"/>
    </location>
    <ligand>
        <name>substrate</name>
    </ligand>
</feature>
<feature type="binding site" evidence="1">
    <location>
        <begin position="123"/>
        <end position="125"/>
    </location>
    <ligand>
        <name>substrate</name>
    </ligand>
</feature>
<feature type="binding site" evidence="1">
    <location>
        <position position="129"/>
    </location>
    <ligand>
        <name>substrate</name>
    </ligand>
</feature>
<feature type="binding site" evidence="1">
    <location>
        <begin position="198"/>
        <end position="203"/>
    </location>
    <ligand>
        <name>NADP(+)</name>
        <dbReference type="ChEBI" id="CHEBI:58349"/>
    </ligand>
</feature>
<feature type="site" description="Important for activity" evidence="1">
    <location>
        <position position="108"/>
    </location>
</feature>
<name>HEM1_POLAQ</name>
<evidence type="ECO:0000255" key="1">
    <source>
        <dbReference type="HAMAP-Rule" id="MF_00087"/>
    </source>
</evidence>
<reference key="1">
    <citation type="journal article" date="2012" name="Stand. Genomic Sci.">
        <title>Complete genome sequence of Polynucleobacter necessarius subsp. asymbioticus type strain (QLW-P1DMWA-1(T)).</title>
        <authorList>
            <person name="Meincke L."/>
            <person name="Copeland A."/>
            <person name="Lapidus A."/>
            <person name="Lucas S."/>
            <person name="Berry K.W."/>
            <person name="Del Rio T.G."/>
            <person name="Hammon N."/>
            <person name="Dalin E."/>
            <person name="Tice H."/>
            <person name="Pitluck S."/>
            <person name="Richardson P."/>
            <person name="Bruce D."/>
            <person name="Goodwin L."/>
            <person name="Han C."/>
            <person name="Tapia R."/>
            <person name="Detter J.C."/>
            <person name="Schmutz J."/>
            <person name="Brettin T."/>
            <person name="Larimer F."/>
            <person name="Land M."/>
            <person name="Hauser L."/>
            <person name="Kyrpides N.C."/>
            <person name="Ivanova N."/>
            <person name="Goker M."/>
            <person name="Woyke T."/>
            <person name="Wu Q.L."/>
            <person name="Pockl M."/>
            <person name="Hahn M.W."/>
            <person name="Klenk H.P."/>
        </authorList>
    </citation>
    <scope>NUCLEOTIDE SEQUENCE [LARGE SCALE GENOMIC DNA]</scope>
    <source>
        <strain>DSM 18221 / CIP 109841 / QLW-P1DMWA-1</strain>
    </source>
</reference>
<keyword id="KW-0521">NADP</keyword>
<keyword id="KW-0560">Oxidoreductase</keyword>
<keyword id="KW-0627">Porphyrin biosynthesis</keyword>
<keyword id="KW-1185">Reference proteome</keyword>
<dbReference type="EC" id="1.2.1.70" evidence="1"/>
<dbReference type="EMBL" id="CP000655">
    <property type="protein sequence ID" value="ABP33358.1"/>
    <property type="molecule type" value="Genomic_DNA"/>
</dbReference>
<dbReference type="RefSeq" id="WP_011901983.1">
    <property type="nucleotide sequence ID" value="NC_009379.1"/>
</dbReference>
<dbReference type="SMR" id="A4SV44"/>
<dbReference type="GeneID" id="31480485"/>
<dbReference type="KEGG" id="pnu:Pnuc_0137"/>
<dbReference type="eggNOG" id="COG0373">
    <property type="taxonomic scope" value="Bacteria"/>
</dbReference>
<dbReference type="HOGENOM" id="CLU_035113_2_2_4"/>
<dbReference type="UniPathway" id="UPA00251">
    <property type="reaction ID" value="UER00316"/>
</dbReference>
<dbReference type="Proteomes" id="UP000000231">
    <property type="component" value="Chromosome"/>
</dbReference>
<dbReference type="GO" id="GO:0008883">
    <property type="term" value="F:glutamyl-tRNA reductase activity"/>
    <property type="evidence" value="ECO:0007669"/>
    <property type="project" value="UniProtKB-UniRule"/>
</dbReference>
<dbReference type="GO" id="GO:0050661">
    <property type="term" value="F:NADP binding"/>
    <property type="evidence" value="ECO:0007669"/>
    <property type="project" value="InterPro"/>
</dbReference>
<dbReference type="GO" id="GO:0019353">
    <property type="term" value="P:protoporphyrinogen IX biosynthetic process from glutamate"/>
    <property type="evidence" value="ECO:0007669"/>
    <property type="project" value="TreeGrafter"/>
</dbReference>
<dbReference type="CDD" id="cd05213">
    <property type="entry name" value="NAD_bind_Glutamyl_tRNA_reduct"/>
    <property type="match status" value="1"/>
</dbReference>
<dbReference type="FunFam" id="3.30.460.30:FF:000001">
    <property type="entry name" value="Glutamyl-tRNA reductase"/>
    <property type="match status" value="1"/>
</dbReference>
<dbReference type="FunFam" id="3.40.50.720:FF:000031">
    <property type="entry name" value="Glutamyl-tRNA reductase"/>
    <property type="match status" value="1"/>
</dbReference>
<dbReference type="Gene3D" id="3.30.460.30">
    <property type="entry name" value="Glutamyl-tRNA reductase, N-terminal domain"/>
    <property type="match status" value="1"/>
</dbReference>
<dbReference type="Gene3D" id="3.40.50.720">
    <property type="entry name" value="NAD(P)-binding Rossmann-like Domain"/>
    <property type="match status" value="1"/>
</dbReference>
<dbReference type="HAMAP" id="MF_00087">
    <property type="entry name" value="Glu_tRNA_reductase"/>
    <property type="match status" value="1"/>
</dbReference>
<dbReference type="InterPro" id="IPR000343">
    <property type="entry name" value="4pyrrol_synth_GluRdtase"/>
</dbReference>
<dbReference type="InterPro" id="IPR015896">
    <property type="entry name" value="4pyrrol_synth_GluRdtase_dimer"/>
</dbReference>
<dbReference type="InterPro" id="IPR015895">
    <property type="entry name" value="4pyrrol_synth_GluRdtase_N"/>
</dbReference>
<dbReference type="InterPro" id="IPR018214">
    <property type="entry name" value="GluRdtase_CS"/>
</dbReference>
<dbReference type="InterPro" id="IPR036453">
    <property type="entry name" value="GluRdtase_dimer_dom_sf"/>
</dbReference>
<dbReference type="InterPro" id="IPR036343">
    <property type="entry name" value="GluRdtase_N_sf"/>
</dbReference>
<dbReference type="InterPro" id="IPR036291">
    <property type="entry name" value="NAD(P)-bd_dom_sf"/>
</dbReference>
<dbReference type="InterPro" id="IPR006151">
    <property type="entry name" value="Shikm_DH/Glu-tRNA_Rdtase"/>
</dbReference>
<dbReference type="NCBIfam" id="TIGR01035">
    <property type="entry name" value="hemA"/>
    <property type="match status" value="1"/>
</dbReference>
<dbReference type="PANTHER" id="PTHR43013">
    <property type="entry name" value="GLUTAMYL-TRNA REDUCTASE"/>
    <property type="match status" value="1"/>
</dbReference>
<dbReference type="PANTHER" id="PTHR43013:SF1">
    <property type="entry name" value="GLUTAMYL-TRNA REDUCTASE"/>
    <property type="match status" value="1"/>
</dbReference>
<dbReference type="Pfam" id="PF00745">
    <property type="entry name" value="GlutR_dimer"/>
    <property type="match status" value="1"/>
</dbReference>
<dbReference type="Pfam" id="PF05201">
    <property type="entry name" value="GlutR_N"/>
    <property type="match status" value="1"/>
</dbReference>
<dbReference type="Pfam" id="PF01488">
    <property type="entry name" value="Shikimate_DH"/>
    <property type="match status" value="1"/>
</dbReference>
<dbReference type="PIRSF" id="PIRSF000445">
    <property type="entry name" value="4pyrrol_synth_GluRdtase"/>
    <property type="match status" value="1"/>
</dbReference>
<dbReference type="SUPFAM" id="SSF69742">
    <property type="entry name" value="Glutamyl tRNA-reductase catalytic, N-terminal domain"/>
    <property type="match status" value="1"/>
</dbReference>
<dbReference type="SUPFAM" id="SSF69075">
    <property type="entry name" value="Glutamyl tRNA-reductase dimerization domain"/>
    <property type="match status" value="1"/>
</dbReference>
<dbReference type="SUPFAM" id="SSF51735">
    <property type="entry name" value="NAD(P)-binding Rossmann-fold domains"/>
    <property type="match status" value="1"/>
</dbReference>
<dbReference type="PROSITE" id="PS00747">
    <property type="entry name" value="GLUTR"/>
    <property type="match status" value="1"/>
</dbReference>
<organism>
    <name type="scientific">Polynucleobacter asymbioticus (strain DSM 18221 / CIP 109841 / QLW-P1DMWA-1)</name>
    <name type="common">Polynucleobacter necessarius subsp. asymbioticus</name>
    <dbReference type="NCBI Taxonomy" id="312153"/>
    <lineage>
        <taxon>Bacteria</taxon>
        <taxon>Pseudomonadati</taxon>
        <taxon>Pseudomonadota</taxon>
        <taxon>Betaproteobacteria</taxon>
        <taxon>Burkholderiales</taxon>
        <taxon>Burkholderiaceae</taxon>
        <taxon>Polynucleobacter</taxon>
    </lineage>
</organism>
<comment type="function">
    <text evidence="1">Catalyzes the NADPH-dependent reduction of glutamyl-tRNA(Glu) to glutamate 1-semialdehyde (GSA).</text>
</comment>
<comment type="catalytic activity">
    <reaction evidence="1">
        <text>(S)-4-amino-5-oxopentanoate + tRNA(Glu) + NADP(+) = L-glutamyl-tRNA(Glu) + NADPH + H(+)</text>
        <dbReference type="Rhea" id="RHEA:12344"/>
        <dbReference type="Rhea" id="RHEA-COMP:9663"/>
        <dbReference type="Rhea" id="RHEA-COMP:9680"/>
        <dbReference type="ChEBI" id="CHEBI:15378"/>
        <dbReference type="ChEBI" id="CHEBI:57501"/>
        <dbReference type="ChEBI" id="CHEBI:57783"/>
        <dbReference type="ChEBI" id="CHEBI:58349"/>
        <dbReference type="ChEBI" id="CHEBI:78442"/>
        <dbReference type="ChEBI" id="CHEBI:78520"/>
        <dbReference type="EC" id="1.2.1.70"/>
    </reaction>
</comment>
<comment type="pathway">
    <text evidence="1">Porphyrin-containing compound metabolism; protoporphyrin-IX biosynthesis; 5-aminolevulinate from L-glutamyl-tRNA(Glu): step 1/2.</text>
</comment>
<comment type="subunit">
    <text evidence="1">Homodimer.</text>
</comment>
<comment type="domain">
    <text evidence="1">Possesses an unusual extended V-shaped dimeric structure with each monomer consisting of three distinct domains arranged along a curved 'spinal' alpha-helix. The N-terminal catalytic domain specifically recognizes the glutamate moiety of the substrate. The second domain is the NADPH-binding domain, and the third C-terminal domain is responsible for dimerization.</text>
</comment>
<comment type="miscellaneous">
    <text evidence="1">During catalysis, the active site Cys acts as a nucleophile attacking the alpha-carbonyl group of tRNA-bound glutamate with the formation of a thioester intermediate between enzyme and glutamate, and the concomitant release of tRNA(Glu). The thioester intermediate is finally reduced by direct hydride transfer from NADPH, to form the product GSA.</text>
</comment>
<comment type="similarity">
    <text evidence="1">Belongs to the glutamyl-tRNA reductase family.</text>
</comment>
<gene>
    <name evidence="1" type="primary">hemA</name>
    <name type="ordered locus">Pnuc_0137</name>
</gene>
<accession>A4SV44</accession>